<dbReference type="EC" id="5.6.1.7" evidence="1"/>
<dbReference type="EMBL" id="BX908798">
    <property type="protein sequence ID" value="CAF23904.1"/>
    <property type="molecule type" value="Genomic_DNA"/>
</dbReference>
<dbReference type="RefSeq" id="WP_011175730.1">
    <property type="nucleotide sequence ID" value="NC_005861.2"/>
</dbReference>
<dbReference type="SMR" id="Q6MBZ5"/>
<dbReference type="STRING" id="264201.pc1180"/>
<dbReference type="KEGG" id="pcu:PC_RS05685"/>
<dbReference type="eggNOG" id="COG0459">
    <property type="taxonomic scope" value="Bacteria"/>
</dbReference>
<dbReference type="HOGENOM" id="CLU_016503_3_0_0"/>
<dbReference type="OrthoDB" id="9766614at2"/>
<dbReference type="Proteomes" id="UP000000529">
    <property type="component" value="Chromosome"/>
</dbReference>
<dbReference type="GO" id="GO:0005737">
    <property type="term" value="C:cytoplasm"/>
    <property type="evidence" value="ECO:0007669"/>
    <property type="project" value="UniProtKB-SubCell"/>
</dbReference>
<dbReference type="GO" id="GO:0005524">
    <property type="term" value="F:ATP binding"/>
    <property type="evidence" value="ECO:0007669"/>
    <property type="project" value="UniProtKB-UniRule"/>
</dbReference>
<dbReference type="GO" id="GO:0140662">
    <property type="term" value="F:ATP-dependent protein folding chaperone"/>
    <property type="evidence" value="ECO:0007669"/>
    <property type="project" value="InterPro"/>
</dbReference>
<dbReference type="GO" id="GO:0016853">
    <property type="term" value="F:isomerase activity"/>
    <property type="evidence" value="ECO:0007669"/>
    <property type="project" value="UniProtKB-KW"/>
</dbReference>
<dbReference type="GO" id="GO:0051082">
    <property type="term" value="F:unfolded protein binding"/>
    <property type="evidence" value="ECO:0007669"/>
    <property type="project" value="UniProtKB-UniRule"/>
</dbReference>
<dbReference type="GO" id="GO:0042026">
    <property type="term" value="P:protein refolding"/>
    <property type="evidence" value="ECO:0007669"/>
    <property type="project" value="UniProtKB-UniRule"/>
</dbReference>
<dbReference type="CDD" id="cd03344">
    <property type="entry name" value="GroEL"/>
    <property type="match status" value="1"/>
</dbReference>
<dbReference type="FunFam" id="1.10.560.10:FF:000001">
    <property type="entry name" value="60 kDa chaperonin"/>
    <property type="match status" value="1"/>
</dbReference>
<dbReference type="FunFam" id="3.50.7.10:FF:000001">
    <property type="entry name" value="60 kDa chaperonin"/>
    <property type="match status" value="1"/>
</dbReference>
<dbReference type="Gene3D" id="3.50.7.10">
    <property type="entry name" value="GroEL"/>
    <property type="match status" value="1"/>
</dbReference>
<dbReference type="Gene3D" id="1.10.560.10">
    <property type="entry name" value="GroEL-like equatorial domain"/>
    <property type="match status" value="1"/>
</dbReference>
<dbReference type="Gene3D" id="3.30.260.10">
    <property type="entry name" value="TCP-1-like chaperonin intermediate domain"/>
    <property type="match status" value="1"/>
</dbReference>
<dbReference type="HAMAP" id="MF_00600">
    <property type="entry name" value="CH60"/>
    <property type="match status" value="1"/>
</dbReference>
<dbReference type="InterPro" id="IPR018370">
    <property type="entry name" value="Chaperonin_Cpn60_CS"/>
</dbReference>
<dbReference type="InterPro" id="IPR001844">
    <property type="entry name" value="Cpn60/GroEL"/>
</dbReference>
<dbReference type="InterPro" id="IPR002423">
    <property type="entry name" value="Cpn60/GroEL/TCP-1"/>
</dbReference>
<dbReference type="InterPro" id="IPR027409">
    <property type="entry name" value="GroEL-like_apical_dom_sf"/>
</dbReference>
<dbReference type="InterPro" id="IPR027413">
    <property type="entry name" value="GROEL-like_equatorial_sf"/>
</dbReference>
<dbReference type="InterPro" id="IPR027410">
    <property type="entry name" value="TCP-1-like_intermed_sf"/>
</dbReference>
<dbReference type="NCBIfam" id="TIGR02348">
    <property type="entry name" value="GroEL"/>
    <property type="match status" value="1"/>
</dbReference>
<dbReference type="NCBIfam" id="NF000592">
    <property type="entry name" value="PRK00013.1"/>
    <property type="match status" value="1"/>
</dbReference>
<dbReference type="NCBIfam" id="NF009487">
    <property type="entry name" value="PRK12849.1"/>
    <property type="match status" value="1"/>
</dbReference>
<dbReference type="NCBIfam" id="NF009488">
    <property type="entry name" value="PRK12850.1"/>
    <property type="match status" value="1"/>
</dbReference>
<dbReference type="NCBIfam" id="NF009489">
    <property type="entry name" value="PRK12851.1"/>
    <property type="match status" value="1"/>
</dbReference>
<dbReference type="PANTHER" id="PTHR45633">
    <property type="entry name" value="60 KDA HEAT SHOCK PROTEIN, MITOCHONDRIAL"/>
    <property type="match status" value="1"/>
</dbReference>
<dbReference type="Pfam" id="PF00118">
    <property type="entry name" value="Cpn60_TCP1"/>
    <property type="match status" value="1"/>
</dbReference>
<dbReference type="PRINTS" id="PR00298">
    <property type="entry name" value="CHAPERONIN60"/>
</dbReference>
<dbReference type="SUPFAM" id="SSF52029">
    <property type="entry name" value="GroEL apical domain-like"/>
    <property type="match status" value="1"/>
</dbReference>
<dbReference type="SUPFAM" id="SSF48592">
    <property type="entry name" value="GroEL equatorial domain-like"/>
    <property type="match status" value="1"/>
</dbReference>
<dbReference type="SUPFAM" id="SSF54849">
    <property type="entry name" value="GroEL-intermediate domain like"/>
    <property type="match status" value="1"/>
</dbReference>
<dbReference type="PROSITE" id="PS00296">
    <property type="entry name" value="CHAPERONINS_CPN60"/>
    <property type="match status" value="1"/>
</dbReference>
<evidence type="ECO:0000255" key="1">
    <source>
        <dbReference type="HAMAP-Rule" id="MF_00600"/>
    </source>
</evidence>
<feature type="chain" id="PRO_0000063472" description="Chaperonin GroEL 2">
    <location>
        <begin position="1"/>
        <end position="540"/>
    </location>
</feature>
<feature type="binding site" evidence="1">
    <location>
        <begin position="30"/>
        <end position="33"/>
    </location>
    <ligand>
        <name>ATP</name>
        <dbReference type="ChEBI" id="CHEBI:30616"/>
    </ligand>
</feature>
<feature type="binding site" evidence="1">
    <location>
        <position position="51"/>
    </location>
    <ligand>
        <name>ATP</name>
        <dbReference type="ChEBI" id="CHEBI:30616"/>
    </ligand>
</feature>
<feature type="binding site" evidence="1">
    <location>
        <begin position="87"/>
        <end position="91"/>
    </location>
    <ligand>
        <name>ATP</name>
        <dbReference type="ChEBI" id="CHEBI:30616"/>
    </ligand>
</feature>
<feature type="binding site" evidence="1">
    <location>
        <position position="415"/>
    </location>
    <ligand>
        <name>ATP</name>
        <dbReference type="ChEBI" id="CHEBI:30616"/>
    </ligand>
</feature>
<feature type="binding site" evidence="1">
    <location>
        <begin position="480"/>
        <end position="482"/>
    </location>
    <ligand>
        <name>ATP</name>
        <dbReference type="ChEBI" id="CHEBI:30616"/>
    </ligand>
</feature>
<feature type="binding site" evidence="1">
    <location>
        <position position="496"/>
    </location>
    <ligand>
        <name>ATP</name>
        <dbReference type="ChEBI" id="CHEBI:30616"/>
    </ligand>
</feature>
<accession>Q6MBZ5</accession>
<organism>
    <name type="scientific">Protochlamydia amoebophila (strain UWE25)</name>
    <dbReference type="NCBI Taxonomy" id="264201"/>
    <lineage>
        <taxon>Bacteria</taxon>
        <taxon>Pseudomonadati</taxon>
        <taxon>Chlamydiota</taxon>
        <taxon>Chlamydiia</taxon>
        <taxon>Parachlamydiales</taxon>
        <taxon>Parachlamydiaceae</taxon>
        <taxon>Candidatus Protochlamydia</taxon>
    </lineage>
</organism>
<sequence>MAAKIIKFKEDARQKILKGVRTLADAVKVTLGPKGRNVVIDKSYGTPHITKDGVTVAKEIELEDKFENMGAQMVKEVASKTADKAGDGTTTATVLAEAIYSEGLRNVAAGANPLDLKRGMEKAVKVIVQELKKRSKTVDDRNEIAQVATISANNDAEIGEMIAQAIEKVGRDGTITVEEGKGFETELDVVKGMKFDRGYLSAYFMTNSESQECILEDAYVLIYEKKISAIKEIIPLLQAVVETGRPLLIIAEDVEGEALATLVVNRLRAGLKVCAVKAPGFGDRRKAMLQDIAILTGGELISEEIGLKLETTTIEQLGRVKKAVLTKDETTLVEGAGTKAAILDRASQIKRQIEESTSDYDKEKLQERLAKLVGGVAVIHVGAATEIEMKEKKDRVDDAQRATAAAVEEGILPGGGTAFIRCIPAVNSLADSLEGDEKTGAKIMARSLSAPLRQIAENAGQEGAIILQAVEKMKEKEGYNALTGEYVDMITAGILDPTKVVRCALENAVSVAAMLLTTEAIVADIPEEKPAPAAPVGMDY</sequence>
<protein>
    <recommendedName>
        <fullName evidence="1">Chaperonin GroEL 2</fullName>
        <ecNumber evidence="1">5.6.1.7</ecNumber>
    </recommendedName>
    <alternativeName>
        <fullName evidence="1">60 kDa chaperonin 2</fullName>
    </alternativeName>
    <alternativeName>
        <fullName evidence="1">Chaperonin-60 2</fullName>
        <shortName evidence="1">Cpn60 2</shortName>
    </alternativeName>
</protein>
<keyword id="KW-0067">ATP-binding</keyword>
<keyword id="KW-0143">Chaperone</keyword>
<keyword id="KW-0963">Cytoplasm</keyword>
<keyword id="KW-0413">Isomerase</keyword>
<keyword id="KW-0547">Nucleotide-binding</keyword>
<keyword id="KW-1185">Reference proteome</keyword>
<reference key="1">
    <citation type="journal article" date="2004" name="Science">
        <title>Illuminating the evolutionary history of chlamydiae.</title>
        <authorList>
            <person name="Horn M."/>
            <person name="Collingro A."/>
            <person name="Schmitz-Esser S."/>
            <person name="Beier C.L."/>
            <person name="Purkhold U."/>
            <person name="Fartmann B."/>
            <person name="Brandt P."/>
            <person name="Nyakatura G.J."/>
            <person name="Droege M."/>
            <person name="Frishman D."/>
            <person name="Rattei T."/>
            <person name="Mewes H.-W."/>
            <person name="Wagner M."/>
        </authorList>
    </citation>
    <scope>NUCLEOTIDE SEQUENCE [LARGE SCALE GENOMIC DNA]</scope>
    <source>
        <strain>UWE25</strain>
    </source>
</reference>
<proteinExistence type="inferred from homology"/>
<comment type="function">
    <text evidence="1">Together with its co-chaperonin GroES, plays an essential role in assisting protein folding. The GroEL-GroES system forms a nano-cage that allows encapsulation of the non-native substrate proteins and provides a physical environment optimized to promote and accelerate protein folding.</text>
</comment>
<comment type="catalytic activity">
    <reaction evidence="1">
        <text>ATP + H2O + a folded polypeptide = ADP + phosphate + an unfolded polypeptide.</text>
        <dbReference type="EC" id="5.6.1.7"/>
    </reaction>
</comment>
<comment type="subunit">
    <text evidence="1">Forms a cylinder of 14 subunits composed of two heptameric rings stacked back-to-back. Interacts with the co-chaperonin GroES.</text>
</comment>
<comment type="subcellular location">
    <subcellularLocation>
        <location evidence="1">Cytoplasm</location>
    </subcellularLocation>
</comment>
<comment type="similarity">
    <text evidence="1">Belongs to the chaperonin (HSP60) family.</text>
</comment>
<gene>
    <name evidence="1" type="primary">groEL2</name>
    <name evidence="1" type="synonym">groL2</name>
    <name type="ordered locus">pc1180</name>
</gene>
<name>CH602_PARUW</name>